<protein>
    <recommendedName>
        <fullName>Type IV secretion system protein virB8</fullName>
    </recommendedName>
</protein>
<sequence length="239" mass="26446">MFGRKQSPQKSVKNGQGNAPSVYDEALNWEAAHVRLVEKSERRAWKIAGAFGTITVLLGIGIAGMLPLKQHVPYLVRVNAQTGAPDILTSLDEKSVSYDTVMDKYWLSQYVIARETYDWYTLQKDYETVGMLSSPSEGQSYASQFQGDKALDKQYGSNVRTSVTIVSIVPNGKGIGTVRFAKTTKRTNETGDGETTHWIATIGYQYVNPSLMSESARLTNPLGFNVTSYRVDPEMGVVQ</sequence>
<proteinExistence type="inferred from homology"/>
<accession>Q9RPX7</accession>
<name>VIRB8_BRUME</name>
<feature type="chain" id="PRO_0000291391" description="Type IV secretion system protein virB8">
    <location>
        <begin position="1"/>
        <end position="239"/>
    </location>
</feature>
<feature type="transmembrane region" description="Helical" evidence="1">
    <location>
        <begin position="47"/>
        <end position="67"/>
    </location>
</feature>
<evidence type="ECO:0000255" key="1"/>
<evidence type="ECO:0000305" key="2"/>
<comment type="subcellular location">
    <subcellularLocation>
        <location evidence="2">Cell inner membrane</location>
        <topology evidence="2">Single-pass membrane protein</topology>
    </subcellularLocation>
</comment>
<comment type="similarity">
    <text evidence="2">Belongs to the virB8 family.</text>
</comment>
<organism>
    <name type="scientific">Brucella melitensis biotype 1 (strain ATCC 23456 / CCUG 17765 / NCTC 10094 / 16M)</name>
    <dbReference type="NCBI Taxonomy" id="224914"/>
    <lineage>
        <taxon>Bacteria</taxon>
        <taxon>Pseudomonadati</taxon>
        <taxon>Pseudomonadota</taxon>
        <taxon>Alphaproteobacteria</taxon>
        <taxon>Hyphomicrobiales</taxon>
        <taxon>Brucellaceae</taxon>
        <taxon>Brucella/Ochrobactrum group</taxon>
        <taxon>Brucella</taxon>
    </lineage>
</organism>
<reference key="1">
    <citation type="journal article" date="2002" name="Proc. Natl. Acad. Sci. U.S.A.">
        <title>The genome sequence of the facultative intracellular pathogen Brucella melitensis.</title>
        <authorList>
            <person name="DelVecchio V.G."/>
            <person name="Kapatral V."/>
            <person name="Redkar R.J."/>
            <person name="Patra G."/>
            <person name="Mujer C."/>
            <person name="Los T."/>
            <person name="Ivanova N."/>
            <person name="Anderson I."/>
            <person name="Bhattacharyya A."/>
            <person name="Lykidis A."/>
            <person name="Reznik G."/>
            <person name="Jablonski L."/>
            <person name="Larsen N."/>
            <person name="D'Souza M."/>
            <person name="Bernal A."/>
            <person name="Mazur M."/>
            <person name="Goltsman E."/>
            <person name="Selkov E."/>
            <person name="Elzer P.H."/>
            <person name="Hagius S."/>
            <person name="O'Callaghan D."/>
            <person name="Letesson J.-J."/>
            <person name="Haselkorn R."/>
            <person name="Kyrpides N.C."/>
            <person name="Overbeek R."/>
        </authorList>
    </citation>
    <scope>NUCLEOTIDE SEQUENCE [LARGE SCALE GENOMIC DNA]</scope>
    <source>
        <strain>ATCC 23456 / CCUG 17765 / NCTC 10094 / 16M</strain>
    </source>
</reference>
<keyword id="KW-0997">Cell inner membrane</keyword>
<keyword id="KW-1003">Cell membrane</keyword>
<keyword id="KW-0472">Membrane</keyword>
<keyword id="KW-0812">Transmembrane</keyword>
<keyword id="KW-1133">Transmembrane helix</keyword>
<keyword id="KW-0843">Virulence</keyword>
<dbReference type="EMBL" id="AE008918">
    <property type="protein sequence ID" value="AAL53273.1"/>
    <property type="molecule type" value="Genomic_DNA"/>
</dbReference>
<dbReference type="PIR" id="AF3513">
    <property type="entry name" value="AF3513"/>
</dbReference>
<dbReference type="RefSeq" id="WP_002966517.1">
    <property type="nucleotide sequence ID" value="NZ_GG703779.1"/>
</dbReference>
<dbReference type="SMR" id="Q9RPX7"/>
<dbReference type="KEGG" id="bme:BMEII0032"/>
<dbReference type="KEGG" id="bmel:DK63_2087"/>
<dbReference type="PATRIC" id="fig|224914.52.peg.2188"/>
<dbReference type="eggNOG" id="COG3736">
    <property type="taxonomic scope" value="Bacteria"/>
</dbReference>
<dbReference type="PhylomeDB" id="Q9RPX7"/>
<dbReference type="Proteomes" id="UP000000419">
    <property type="component" value="Chromosome II"/>
</dbReference>
<dbReference type="GO" id="GO:0005886">
    <property type="term" value="C:plasma membrane"/>
    <property type="evidence" value="ECO:0007669"/>
    <property type="project" value="UniProtKB-SubCell"/>
</dbReference>
<dbReference type="GO" id="GO:0030255">
    <property type="term" value="P:protein secretion by the type IV secretion system"/>
    <property type="evidence" value="ECO:0007669"/>
    <property type="project" value="InterPro"/>
</dbReference>
<dbReference type="CDD" id="cd16424">
    <property type="entry name" value="VirB8"/>
    <property type="match status" value="1"/>
</dbReference>
<dbReference type="Gene3D" id="3.10.450.230">
    <property type="entry name" value="VirB8 protein"/>
    <property type="match status" value="1"/>
</dbReference>
<dbReference type="InterPro" id="IPR032710">
    <property type="entry name" value="NTF2-like_dom_sf"/>
</dbReference>
<dbReference type="InterPro" id="IPR007430">
    <property type="entry name" value="VirB8"/>
</dbReference>
<dbReference type="InterPro" id="IPR026264">
    <property type="entry name" value="VirB8/PtlE"/>
</dbReference>
<dbReference type="Pfam" id="PF04335">
    <property type="entry name" value="VirB8"/>
    <property type="match status" value="1"/>
</dbReference>
<dbReference type="PIRSF" id="PIRSF003299">
    <property type="entry name" value="VirB8_PtlE"/>
    <property type="match status" value="1"/>
</dbReference>
<dbReference type="SUPFAM" id="SSF54427">
    <property type="entry name" value="NTF2-like"/>
    <property type="match status" value="1"/>
</dbReference>
<gene>
    <name type="primary">virB8</name>
    <name type="ordered locus">BMEII0032</name>
</gene>